<keyword id="KW-0067">ATP-binding</keyword>
<keyword id="KW-0342">GTP-binding</keyword>
<keyword id="KW-0547">Nucleotide-binding</keyword>
<keyword id="KW-1185">Reference proteome</keyword>
<sequence length="295" mass="33887">MPENLQLVIITGMSGAGKTVAVQSFEDMGYFCIDNLPPSLIPKFWELIKESGKVTKIALVIDLRSRTFFREIQDMLVELENTNFIDTTILFLDATDEELVSRYKETRRAHPMAMDGLVTEGIRKERAMLEEIKADAQLVIDTTDLSPRQLRERLNKELATRETHEFRVEMVSFGFKYGLPIDADIVMDVRFLPNPHYIDELRPLTGMDQPVYDYVMGFPETDEFYTKFIDLLRTVLPGYKKEGKSSVTIAIGCTGGQHRSVALTERVGAELKEEDYHVNITHRDRLKRKETVNRS</sequence>
<reference key="1">
    <citation type="journal article" date="2003" name="Science">
        <title>Role of mobile DNA in the evolution of vancomycin-resistant Enterococcus faecalis.</title>
        <authorList>
            <person name="Paulsen I.T."/>
            <person name="Banerjei L."/>
            <person name="Myers G.S.A."/>
            <person name="Nelson K.E."/>
            <person name="Seshadri R."/>
            <person name="Read T.D."/>
            <person name="Fouts D.E."/>
            <person name="Eisen J.A."/>
            <person name="Gill S.R."/>
            <person name="Heidelberg J.F."/>
            <person name="Tettelin H."/>
            <person name="Dodson R.J."/>
            <person name="Umayam L.A."/>
            <person name="Brinkac L.M."/>
            <person name="Beanan M.J."/>
            <person name="Daugherty S.C."/>
            <person name="DeBoy R.T."/>
            <person name="Durkin S.A."/>
            <person name="Kolonay J.F."/>
            <person name="Madupu R."/>
            <person name="Nelson W.C."/>
            <person name="Vamathevan J.J."/>
            <person name="Tran B."/>
            <person name="Upton J."/>
            <person name="Hansen T."/>
            <person name="Shetty J."/>
            <person name="Khouri H.M."/>
            <person name="Utterback T.R."/>
            <person name="Radune D."/>
            <person name="Ketchum K.A."/>
            <person name="Dougherty B.A."/>
            <person name="Fraser C.M."/>
        </authorList>
    </citation>
    <scope>NUCLEOTIDE SEQUENCE [LARGE SCALE GENOMIC DNA]</scope>
    <source>
        <strain>ATCC 700802 / V583</strain>
    </source>
</reference>
<name>Y766_ENTFA</name>
<proteinExistence type="inferred from homology"/>
<gene>
    <name type="ordered locus">EF_0766</name>
</gene>
<accession>Q837R5</accession>
<feature type="chain" id="PRO_0000107708" description="Nucleotide-binding protein EF_0766">
    <location>
        <begin position="1"/>
        <end position="295"/>
    </location>
</feature>
<feature type="binding site" evidence="1">
    <location>
        <begin position="12"/>
        <end position="19"/>
    </location>
    <ligand>
        <name>ATP</name>
        <dbReference type="ChEBI" id="CHEBI:30616"/>
    </ligand>
</feature>
<feature type="binding site" evidence="1">
    <location>
        <begin position="62"/>
        <end position="65"/>
    </location>
    <ligand>
        <name>GTP</name>
        <dbReference type="ChEBI" id="CHEBI:37565"/>
    </ligand>
</feature>
<evidence type="ECO:0000255" key="1">
    <source>
        <dbReference type="HAMAP-Rule" id="MF_00636"/>
    </source>
</evidence>
<organism>
    <name type="scientific">Enterococcus faecalis (strain ATCC 700802 / V583)</name>
    <dbReference type="NCBI Taxonomy" id="226185"/>
    <lineage>
        <taxon>Bacteria</taxon>
        <taxon>Bacillati</taxon>
        <taxon>Bacillota</taxon>
        <taxon>Bacilli</taxon>
        <taxon>Lactobacillales</taxon>
        <taxon>Enterococcaceae</taxon>
        <taxon>Enterococcus</taxon>
    </lineage>
</organism>
<dbReference type="EMBL" id="AE016830">
    <property type="protein sequence ID" value="AAO80583.1"/>
    <property type="molecule type" value="Genomic_DNA"/>
</dbReference>
<dbReference type="RefSeq" id="NP_814513.1">
    <property type="nucleotide sequence ID" value="NC_004668.1"/>
</dbReference>
<dbReference type="SMR" id="Q837R5"/>
<dbReference type="STRING" id="226185.EF_0766"/>
<dbReference type="EnsemblBacteria" id="AAO80583">
    <property type="protein sequence ID" value="AAO80583"/>
    <property type="gene ID" value="EF_0766"/>
</dbReference>
<dbReference type="KEGG" id="efa:EF0766"/>
<dbReference type="PATRIC" id="fig|226185.45.peg.2706"/>
<dbReference type="eggNOG" id="COG1660">
    <property type="taxonomic scope" value="Bacteria"/>
</dbReference>
<dbReference type="HOGENOM" id="CLU_059558_0_0_9"/>
<dbReference type="Proteomes" id="UP000001415">
    <property type="component" value="Chromosome"/>
</dbReference>
<dbReference type="GO" id="GO:0005524">
    <property type="term" value="F:ATP binding"/>
    <property type="evidence" value="ECO:0007669"/>
    <property type="project" value="UniProtKB-UniRule"/>
</dbReference>
<dbReference type="GO" id="GO:0005525">
    <property type="term" value="F:GTP binding"/>
    <property type="evidence" value="ECO:0007669"/>
    <property type="project" value="UniProtKB-UniRule"/>
</dbReference>
<dbReference type="Gene3D" id="3.40.50.300">
    <property type="entry name" value="P-loop containing nucleotide triphosphate hydrolases"/>
    <property type="match status" value="1"/>
</dbReference>
<dbReference type="HAMAP" id="MF_00636">
    <property type="entry name" value="RapZ_like"/>
    <property type="match status" value="1"/>
</dbReference>
<dbReference type="InterPro" id="IPR027417">
    <property type="entry name" value="P-loop_NTPase"/>
</dbReference>
<dbReference type="InterPro" id="IPR005337">
    <property type="entry name" value="RapZ-like"/>
</dbReference>
<dbReference type="InterPro" id="IPR053930">
    <property type="entry name" value="RapZ-like_N"/>
</dbReference>
<dbReference type="InterPro" id="IPR053931">
    <property type="entry name" value="RapZ_C"/>
</dbReference>
<dbReference type="NCBIfam" id="NF003828">
    <property type="entry name" value="PRK05416.1"/>
    <property type="match status" value="1"/>
</dbReference>
<dbReference type="PANTHER" id="PTHR30448">
    <property type="entry name" value="RNASE ADAPTER PROTEIN RAPZ"/>
    <property type="match status" value="1"/>
</dbReference>
<dbReference type="PANTHER" id="PTHR30448:SF0">
    <property type="entry name" value="RNASE ADAPTER PROTEIN RAPZ"/>
    <property type="match status" value="1"/>
</dbReference>
<dbReference type="Pfam" id="PF22740">
    <property type="entry name" value="PapZ_C"/>
    <property type="match status" value="1"/>
</dbReference>
<dbReference type="Pfam" id="PF03668">
    <property type="entry name" value="RapZ-like_N"/>
    <property type="match status" value="1"/>
</dbReference>
<dbReference type="PIRSF" id="PIRSF005052">
    <property type="entry name" value="P-loopkin"/>
    <property type="match status" value="1"/>
</dbReference>
<dbReference type="SUPFAM" id="SSF52540">
    <property type="entry name" value="P-loop containing nucleoside triphosphate hydrolases"/>
    <property type="match status" value="1"/>
</dbReference>
<protein>
    <recommendedName>
        <fullName evidence="1">Nucleotide-binding protein EF_0766</fullName>
    </recommendedName>
</protein>
<comment type="function">
    <text evidence="1">Displays ATPase and GTPase activities.</text>
</comment>
<comment type="similarity">
    <text evidence="1">Belongs to the RapZ-like family.</text>
</comment>